<dbReference type="EC" id="1.3.1.-" evidence="5"/>
<dbReference type="EMBL" id="L02540">
    <property type="protein sequence ID" value="AAA33517.1"/>
    <property type="molecule type" value="Genomic_DNA"/>
</dbReference>
<dbReference type="EMBL" id="AF041043">
    <property type="protein sequence ID" value="AAC04333.1"/>
    <property type="molecule type" value="mRNA"/>
</dbReference>
<dbReference type="EMBL" id="CM007647">
    <property type="protein sequence ID" value="ONM03679.1"/>
    <property type="status" value="ALT_SEQ"/>
    <property type="molecule type" value="Genomic_DNA"/>
</dbReference>
<dbReference type="EMBL" id="NCVQ01000001">
    <property type="protein sequence ID" value="PWZ55500.1"/>
    <property type="status" value="ALT_SEQ"/>
    <property type="molecule type" value="Genomic_DNA"/>
</dbReference>
<dbReference type="EMBL" id="AY101969">
    <property type="protein sequence ID" value="AAM78328.1"/>
    <property type="molecule type" value="Genomic_DNA"/>
</dbReference>
<dbReference type="EMBL" id="AY101970">
    <property type="protein sequence ID" value="AAM78329.1"/>
    <property type="molecule type" value="Genomic_DNA"/>
</dbReference>
<dbReference type="PIR" id="T01434">
    <property type="entry name" value="T01434"/>
</dbReference>
<dbReference type="PIR" id="T03970">
    <property type="entry name" value="T03970"/>
</dbReference>
<dbReference type="RefSeq" id="NP_001105920.1">
    <property type="nucleotide sequence ID" value="NM_001112450.1"/>
</dbReference>
<dbReference type="RefSeq" id="XP_008649390.1">
    <property type="nucleotide sequence ID" value="XM_008651168.1"/>
</dbReference>
<dbReference type="SMR" id="O49163"/>
<dbReference type="GeneID" id="732845"/>
<dbReference type="KEGG" id="zma:732845"/>
<dbReference type="OrthoDB" id="2735536at2759"/>
<dbReference type="Proteomes" id="UP000007305">
    <property type="component" value="Chromosome 1"/>
</dbReference>
<dbReference type="Proteomes" id="UP000251960">
    <property type="component" value="Chromosome 1"/>
</dbReference>
<dbReference type="ExpressionAtlas" id="O49163">
    <property type="expression patterns" value="baseline and differential"/>
</dbReference>
<dbReference type="GO" id="GO:0004033">
    <property type="term" value="F:aldo-keto reductase (NADPH) activity"/>
    <property type="evidence" value="ECO:0000314"/>
    <property type="project" value="UniProtKB"/>
</dbReference>
<dbReference type="GO" id="GO:0016491">
    <property type="term" value="F:oxidoreductase activity"/>
    <property type="evidence" value="ECO:0000314"/>
    <property type="project" value="UniProtKB"/>
</dbReference>
<dbReference type="GO" id="GO:0050832">
    <property type="term" value="P:defense response to fungus"/>
    <property type="evidence" value="ECO:0000314"/>
    <property type="project" value="UniProtKB"/>
</dbReference>
<dbReference type="GO" id="GO:0009407">
    <property type="term" value="P:toxin catabolic process"/>
    <property type="evidence" value="ECO:0000314"/>
    <property type="project" value="UniProtKB"/>
</dbReference>
<dbReference type="CDD" id="cd08958">
    <property type="entry name" value="FR_SDR_e"/>
    <property type="match status" value="1"/>
</dbReference>
<dbReference type="FunFam" id="3.40.50.720:FF:000409">
    <property type="entry name" value="NADPH HC toxin reductase"/>
    <property type="match status" value="1"/>
</dbReference>
<dbReference type="Gene3D" id="3.40.50.720">
    <property type="entry name" value="NAD(P)-binding Rossmann-like Domain"/>
    <property type="match status" value="1"/>
</dbReference>
<dbReference type="InterPro" id="IPR001509">
    <property type="entry name" value="Epimerase_deHydtase"/>
</dbReference>
<dbReference type="InterPro" id="IPR036291">
    <property type="entry name" value="NAD(P)-bd_dom_sf"/>
</dbReference>
<dbReference type="InterPro" id="IPR050425">
    <property type="entry name" value="NAD(P)_dehydrat-like"/>
</dbReference>
<dbReference type="PANTHER" id="PTHR10366">
    <property type="entry name" value="NAD DEPENDENT EPIMERASE/DEHYDRATASE"/>
    <property type="match status" value="1"/>
</dbReference>
<dbReference type="PANTHER" id="PTHR10366:SF738">
    <property type="entry name" value="NAD-DEPENDENT EPIMERASE_DEHYDRATASE DOMAIN-CONTAINING PROTEIN"/>
    <property type="match status" value="1"/>
</dbReference>
<dbReference type="Pfam" id="PF01370">
    <property type="entry name" value="Epimerase"/>
    <property type="match status" value="1"/>
</dbReference>
<dbReference type="SUPFAM" id="SSF51735">
    <property type="entry name" value="NAD(P)-binding Rossmann-fold domains"/>
    <property type="match status" value="1"/>
</dbReference>
<accession>O49163</accession>
<accession>A0A1D6KLB3</accession>
<accession>A0A317YA53</accession>
<accession>A0A804LUT1</accession>
<accession>Q41867</accession>
<accession>Q8L4E1</accession>
<sequence>MAEKESNGVRVCVTGGAGFIGSWLVRKLLEKGYTVHATLRNTGDEAKAGLLRRLVPGAAERLRLFQADLFDAATFAPAIAGCQFVFLVATPFGLDSAGSQYKSTAEAVVDAVHAILRQCEESRTVKRVIHTASVAAASPLLEEEVPASGVGYRDFIDESCWTSLNVDYPLRSAHFDKYILSKLQSEQELLSYNNGESPAFEVVTLPLGLVAGDTVLGRAPETVESAVAPVSRSEPYFGLLRILQQLLGSLPLVHVDDVCDALVFCMERRPSVAGRFLCAAAYPTIHDVVAHYASKFPHLDILKETTEAVATVRPARDRLGELGFKYKYGMEEILDSSVACAARLGSLDASKLGLQKG</sequence>
<reference key="1">
    <citation type="journal article" date="1992" name="Science">
        <title>Reductase activity encoded by the HM1 disease resistance gene in maize.</title>
        <authorList>
            <person name="Johal G.S."/>
            <person name="Briggs S.P."/>
        </authorList>
    </citation>
    <scope>NUCLEOTIDE SEQUENCE [GENOMIC DNA]</scope>
    <scope>FUNCTION</scope>
    <scope>VARIANTS ARG-113; SER-146; ARG-184; GLY-194; CYS-236 AND THR-305 DEL</scope>
    <source>
        <strain>cv. B73</strain>
        <tissue>Seedling shoot</tissue>
    </source>
</reference>
<reference key="2">
    <citation type="journal article" date="1998" name="Proc. Natl. Acad. Sci. U.S.A.">
        <title>Plant-pathogen microevolution: molecular basis for the origin of a fungal disease in maize.</title>
        <authorList>
            <person name="Multani D.S."/>
            <person name="Meeley R.B."/>
            <person name="Paterson A.H."/>
            <person name="Gray J."/>
            <person name="Briggs S.P."/>
            <person name="Johal G.S."/>
        </authorList>
    </citation>
    <scope>NUCLEOTIDE SEQUENCE [MRNA]</scope>
    <scope>FUNCTION</scope>
    <source>
        <strain>cv. B73</strain>
        <strain>cv. K41</strain>
        <strain>cv. K44</strain>
        <strain>cv. K61</strain>
        <strain>cv. Missouri 21A</strain>
        <strain>cv. Pr</strain>
        <strain>cv. Wisconsin 22</strain>
        <tissue>Endosperm</tissue>
    </source>
</reference>
<reference key="3">
    <citation type="journal article" date="2009" name="Science">
        <title>The B73 maize genome: complexity, diversity, and dynamics.</title>
        <authorList>
            <person name="Schnable P.S."/>
            <person name="Ware D."/>
            <person name="Fulton R.S."/>
            <person name="Stein J.C."/>
            <person name="Wei F."/>
            <person name="Pasternak S."/>
            <person name="Liang C."/>
            <person name="Zhang J."/>
            <person name="Fulton L."/>
            <person name="Graves T.A."/>
            <person name="Minx P."/>
            <person name="Reily A.D."/>
            <person name="Courtney L."/>
            <person name="Kruchowski S.S."/>
            <person name="Tomlinson C."/>
            <person name="Strong C."/>
            <person name="Delehaunty K."/>
            <person name="Fronick C."/>
            <person name="Courtney B."/>
            <person name="Rock S.M."/>
            <person name="Belter E."/>
            <person name="Du F."/>
            <person name="Kim K."/>
            <person name="Abbott R.M."/>
            <person name="Cotton M."/>
            <person name="Levy A."/>
            <person name="Marchetto P."/>
            <person name="Ochoa K."/>
            <person name="Jackson S.M."/>
            <person name="Gillam B."/>
            <person name="Chen W."/>
            <person name="Yan L."/>
            <person name="Higginbotham J."/>
            <person name="Cardenas M."/>
            <person name="Waligorski J."/>
            <person name="Applebaum E."/>
            <person name="Phelps L."/>
            <person name="Falcone J."/>
            <person name="Kanchi K."/>
            <person name="Thane T."/>
            <person name="Scimone A."/>
            <person name="Thane N."/>
            <person name="Henke J."/>
            <person name="Wang T."/>
            <person name="Ruppert J."/>
            <person name="Shah N."/>
            <person name="Rotter K."/>
            <person name="Hodges J."/>
            <person name="Ingenthron E."/>
            <person name="Cordes M."/>
            <person name="Kohlberg S."/>
            <person name="Sgro J."/>
            <person name="Delgado B."/>
            <person name="Mead K."/>
            <person name="Chinwalla A."/>
            <person name="Leonard S."/>
            <person name="Crouse K."/>
            <person name="Collura K."/>
            <person name="Kudrna D."/>
            <person name="Currie J."/>
            <person name="He R."/>
            <person name="Angelova A."/>
            <person name="Rajasekar S."/>
            <person name="Mueller T."/>
            <person name="Lomeli R."/>
            <person name="Scara G."/>
            <person name="Ko A."/>
            <person name="Delaney K."/>
            <person name="Wissotski M."/>
            <person name="Lopez G."/>
            <person name="Campos D."/>
            <person name="Braidotti M."/>
            <person name="Ashley E."/>
            <person name="Golser W."/>
            <person name="Kim H."/>
            <person name="Lee S."/>
            <person name="Lin J."/>
            <person name="Dujmic Z."/>
            <person name="Kim W."/>
            <person name="Talag J."/>
            <person name="Zuccolo A."/>
            <person name="Fan C."/>
            <person name="Sebastian A."/>
            <person name="Kramer M."/>
            <person name="Spiegel L."/>
            <person name="Nascimento L."/>
            <person name="Zutavern T."/>
            <person name="Miller B."/>
            <person name="Ambroise C."/>
            <person name="Muller S."/>
            <person name="Spooner W."/>
            <person name="Narechania A."/>
            <person name="Ren L."/>
            <person name="Wei S."/>
            <person name="Kumari S."/>
            <person name="Faga B."/>
            <person name="Levy M.J."/>
            <person name="McMahan L."/>
            <person name="Van Buren P."/>
            <person name="Vaughn M.W."/>
            <person name="Ying K."/>
            <person name="Yeh C.-T."/>
            <person name="Emrich S.J."/>
            <person name="Jia Y."/>
            <person name="Kalyanaraman A."/>
            <person name="Hsia A.-P."/>
            <person name="Barbazuk W.B."/>
            <person name="Baucom R.S."/>
            <person name="Brutnell T.P."/>
            <person name="Carpita N.C."/>
            <person name="Chaparro C."/>
            <person name="Chia J.-M."/>
            <person name="Deragon J.-M."/>
            <person name="Estill J.C."/>
            <person name="Fu Y."/>
            <person name="Jeddeloh J.A."/>
            <person name="Han Y."/>
            <person name="Lee H."/>
            <person name="Li P."/>
            <person name="Lisch D.R."/>
            <person name="Liu S."/>
            <person name="Liu Z."/>
            <person name="Nagel D.H."/>
            <person name="McCann M.C."/>
            <person name="SanMiguel P."/>
            <person name="Myers A.M."/>
            <person name="Nettleton D."/>
            <person name="Nguyen J."/>
            <person name="Penning B.W."/>
            <person name="Ponnala L."/>
            <person name="Schneider K.L."/>
            <person name="Schwartz D.C."/>
            <person name="Sharma A."/>
            <person name="Soderlund C."/>
            <person name="Springer N.M."/>
            <person name="Sun Q."/>
            <person name="Wang H."/>
            <person name="Waterman M."/>
            <person name="Westerman R."/>
            <person name="Wolfgruber T.K."/>
            <person name="Yang L."/>
            <person name="Yu Y."/>
            <person name="Zhang L."/>
            <person name="Zhou S."/>
            <person name="Zhu Q."/>
            <person name="Bennetzen J.L."/>
            <person name="Dawe R.K."/>
            <person name="Jiang J."/>
            <person name="Jiang N."/>
            <person name="Presting G.G."/>
            <person name="Wessler S.R."/>
            <person name="Aluru S."/>
            <person name="Martienssen R.A."/>
            <person name="Clifton S.W."/>
            <person name="McCombie W.R."/>
            <person name="Wing R.A."/>
            <person name="Wilson R.K."/>
        </authorList>
    </citation>
    <scope>NUCLEOTIDE SEQUENCE [LARGE SCALE GENOMIC DNA]</scope>
    <scope>VARIANTS ARG-113; SER-146; ARG-184; GLY-194; CYS-236 AND THR-305 DEL</scope>
    <source>
        <strain>cv. B73</strain>
        <tissue>Seedling</tissue>
    </source>
</reference>
<reference key="4">
    <citation type="journal article" date="2018" name="Nat. Genet.">
        <title>Extensive intraspecific gene order and gene structural variations between Mo17 and other maize genomes.</title>
        <authorList>
            <person name="Sun S."/>
            <person name="Zhou Y."/>
            <person name="Chen J."/>
            <person name="Shi J."/>
            <person name="Zhao H."/>
            <person name="Zhao H."/>
            <person name="Song W."/>
            <person name="Zhang M."/>
            <person name="Cui Y."/>
            <person name="Dong X."/>
            <person name="Liu H."/>
            <person name="Ma X."/>
            <person name="Jiao Y."/>
            <person name="Wang B."/>
            <person name="Wei X."/>
            <person name="Stein J.C."/>
            <person name="Glaubitz J.C."/>
            <person name="Lu F."/>
            <person name="Yu G."/>
            <person name="Liang C."/>
            <person name="Fengler K."/>
            <person name="Li B."/>
            <person name="Rafalski A."/>
            <person name="Schnable P.S."/>
            <person name="Ware D.H."/>
            <person name="Buckler E.S."/>
            <person name="Lai J."/>
        </authorList>
    </citation>
    <scope>NUCLEOTIDE SEQUENCE [LARGE SCALE GENOMIC DNA]</scope>
    <source>
        <strain>cv. Missouri 17</strain>
        <tissue>Seedling</tissue>
    </source>
</reference>
<reference key="5">
    <citation type="journal article" date="2002" name="Genetics">
        <title>Population genetics of duplicated disease-defense genes, hm1 and hm2, in maize (Zea mays ssp. mays L.) and its wild ancestor (Zea mays ssp. parviglumis).</title>
        <authorList>
            <person name="Zhang L."/>
            <person name="Peek A.S."/>
            <person name="Dunams D."/>
            <person name="Gaut B.S."/>
        </authorList>
    </citation>
    <scope>NUCLEOTIDE SEQUENCE [GENOMIC DNA] OF 44-281</scope>
    <source>
        <strain>cv. Araguito</strain>
        <strain>cv. Chococeno</strain>
    </source>
</reference>
<reference key="6">
    <citation type="journal article" date="1991" name="Plant Physiol.">
        <title>Enzymatic detoxification of HC-toxin, the host-selective cyclic peptide from Cochliobolus carbonum.</title>
        <authorList>
            <person name="Meeley R.B."/>
            <person name="Walton J.D."/>
        </authorList>
    </citation>
    <scope>FUNCTION</scope>
    <scope>ACTIVITY REGULATION</scope>
</reference>
<reference key="7">
    <citation type="journal article" date="2006" name="Phytochemistry">
        <title>HC-toxin.</title>
        <authorList>
            <person name="Walton J.D."/>
        </authorList>
    </citation>
    <scope>REVIEW ON HC-TOXIN</scope>
</reference>
<proteinExistence type="evidence at transcript level"/>
<feature type="chain" id="PRO_0000458659" description="NADPH HC-toxin reductase 1">
    <location>
        <begin position="1"/>
        <end position="357"/>
    </location>
</feature>
<feature type="active site" description="Proton donor" evidence="3">
    <location>
        <position position="182"/>
    </location>
</feature>
<feature type="binding site" evidence="2">
    <location>
        <position position="40"/>
    </location>
    <ligand>
        <name>NADP(+)</name>
        <dbReference type="ChEBI" id="CHEBI:58349"/>
    </ligand>
</feature>
<feature type="binding site" evidence="2">
    <location>
        <position position="47"/>
    </location>
    <ligand>
        <name>NADP(+)</name>
        <dbReference type="ChEBI" id="CHEBI:58349"/>
    </ligand>
</feature>
<feature type="binding site" evidence="2">
    <location>
        <begin position="68"/>
        <end position="69"/>
    </location>
    <ligand>
        <name>NADP(+)</name>
        <dbReference type="ChEBI" id="CHEBI:58349"/>
    </ligand>
</feature>
<feature type="binding site" evidence="2">
    <location>
        <begin position="88"/>
        <end position="90"/>
    </location>
    <ligand>
        <name>NADP(+)</name>
        <dbReference type="ChEBI" id="CHEBI:58349"/>
    </ligand>
</feature>
<feature type="binding site" evidence="1">
    <location>
        <position position="178"/>
    </location>
    <ligand>
        <name>NADP(+)</name>
        <dbReference type="ChEBI" id="CHEBI:58349"/>
    </ligand>
</feature>
<feature type="binding site" evidence="2">
    <location>
        <position position="182"/>
    </location>
    <ligand>
        <name>NADP(+)</name>
        <dbReference type="ChEBI" id="CHEBI:58349"/>
    </ligand>
</feature>
<feature type="binding site" evidence="2">
    <location>
        <begin position="207"/>
        <end position="210"/>
    </location>
    <ligand>
        <name>NADP(+)</name>
        <dbReference type="ChEBI" id="CHEBI:58349"/>
    </ligand>
</feature>
<feature type="binding site" evidence="2">
    <location>
        <position position="222"/>
    </location>
    <ligand>
        <name>NADP(+)</name>
        <dbReference type="ChEBI" id="CHEBI:58349"/>
    </ligand>
</feature>
<feature type="sequence variant" description="In strain: cv. B73." evidence="4 6">
    <original>H</original>
    <variation>R</variation>
    <location>
        <position position="113"/>
    </location>
</feature>
<feature type="sequence variant" description="In strain: cv. B73." evidence="4 6">
    <original>P</original>
    <variation>S</variation>
    <location>
        <position position="146"/>
    </location>
</feature>
<feature type="sequence variant" description="In strain: cv. B73." evidence="4 6">
    <original>Q</original>
    <variation>R</variation>
    <location>
        <position position="184"/>
    </location>
</feature>
<feature type="sequence variant" description="In strain: cv. B73." evidence="4 6">
    <original>N</original>
    <variation>G</variation>
    <location>
        <position position="194"/>
    </location>
</feature>
<feature type="sequence variant" description="In strain: cv. B73." evidence="4 6">
    <original>Y</original>
    <variation>C</variation>
    <location>
        <position position="236"/>
    </location>
</feature>
<feature type="sequence variant" description="In strain: cv. B73." evidence="4 6">
    <location>
        <position position="305"/>
    </location>
</feature>
<feature type="sequence conflict" description="In Ref. 2; AAC04333." evidence="13" ref="2">
    <original>A</original>
    <variation>G</variation>
    <location>
        <position position="349"/>
    </location>
</feature>
<organism>
    <name type="scientific">Zea mays</name>
    <name type="common">Maize</name>
    <dbReference type="NCBI Taxonomy" id="4577"/>
    <lineage>
        <taxon>Eukaryota</taxon>
        <taxon>Viridiplantae</taxon>
        <taxon>Streptophyta</taxon>
        <taxon>Embryophyta</taxon>
        <taxon>Tracheophyta</taxon>
        <taxon>Spermatophyta</taxon>
        <taxon>Magnoliopsida</taxon>
        <taxon>Liliopsida</taxon>
        <taxon>Poales</taxon>
        <taxon>Poaceae</taxon>
        <taxon>PACMAD clade</taxon>
        <taxon>Panicoideae</taxon>
        <taxon>Andropogonodae</taxon>
        <taxon>Andropogoneae</taxon>
        <taxon>Tripsacinae</taxon>
        <taxon>Zea</taxon>
    </lineage>
</organism>
<comment type="function">
    <text evidence="4 5 7 10">In tandem with Hm2, NADPH-dependent Helminthosporium carbonum (HC) toxin reductase (HCTR), which inactivates HC toxin, a cyclic tetrapeptide produced by the fungus Cochliobolus carbonum to permit infection and acting as an inhibitor of host histone deacetylases (HDACs), thus conferring resistance against C.carbonum race 1 in resistant cultivars (e.g. cv. B73 and cv. Wisconsin 22) (PubMed:1359642, PubMed:16839576, PubMed:9465077). Catalyzes the production of 8-hydroxy derivative of HC-toxin via the reduction of the 8-keto group of 2-amino-9,10-epoxy-8-oxo-decanoic acid, an amino acid of the HC-toxin (PubMed:16668492).</text>
</comment>
<comment type="activity regulation">
    <text evidence="5">Activity is sensitive to heat, dependent on NADPH, and inhibited by p-hydroxymercuribenzoate and disulfiram.</text>
</comment>
<comment type="miscellaneous">
    <text evidence="7">Plants susceptible (e.g. cv. Pr, cv. K41, cv. K44 and cv. K61) to the fungus Cochliobolus carbonum race 1 contain a transposon insertion (Drone) in Hm1 and a deletion in Hm2 due to a loss of resistance (PubMed:9465077). However, the compatible cultivar Missouri 21A (cv. MO21A) possesses other defects in Hm1 and Hm2 alleles coming from different mutational events (PubMed:9465077).</text>
</comment>
<comment type="similarity">
    <text evidence="13">Belongs to the NAD(P)-dependent epimerase/dehydratase family.</text>
</comment>
<comment type="sequence caution" evidence="13">
    <conflict type="erroneous gene model prediction">
        <sequence resource="EMBL-CDS" id="ONM03679"/>
    </conflict>
</comment>
<comment type="sequence caution" evidence="13">
    <conflict type="erroneous gene model prediction">
        <sequence resource="EMBL-CDS" id="PWZ55500"/>
    </conflict>
</comment>
<keyword id="KW-0521">NADP</keyword>
<keyword id="KW-0560">Oxidoreductase</keyword>
<keyword id="KW-0611">Plant defense</keyword>
<keyword id="KW-1185">Reference proteome</keyword>
<name>HM1_MAIZE</name>
<evidence type="ECO:0000250" key="1">
    <source>
        <dbReference type="UniProtKB" id="A0A059TC02"/>
    </source>
</evidence>
<evidence type="ECO:0000250" key="2">
    <source>
        <dbReference type="UniProtKB" id="P51110"/>
    </source>
</evidence>
<evidence type="ECO:0000250" key="3">
    <source>
        <dbReference type="UniProtKB" id="Q12068"/>
    </source>
</evidence>
<evidence type="ECO:0000269" key="4">
    <source>
    </source>
</evidence>
<evidence type="ECO:0000269" key="5">
    <source>
    </source>
</evidence>
<evidence type="ECO:0000269" key="6">
    <source>
    </source>
</evidence>
<evidence type="ECO:0000269" key="7">
    <source>
    </source>
</evidence>
<evidence type="ECO:0000303" key="8">
    <source>
    </source>
</evidence>
<evidence type="ECO:0000303" key="9">
    <source>
    </source>
</evidence>
<evidence type="ECO:0000303" key="10">
    <source>
    </source>
</evidence>
<evidence type="ECO:0000303" key="11">
    <source>
    </source>
</evidence>
<evidence type="ECO:0000303" key="12">
    <source>
    </source>
</evidence>
<evidence type="ECO:0000305" key="13"/>
<evidence type="ECO:0000312" key="14">
    <source>
        <dbReference type="EMBL" id="ONM03679.1"/>
    </source>
</evidence>
<evidence type="ECO:0000312" key="15">
    <source>
        <dbReference type="EMBL" id="PWZ55500.1"/>
    </source>
</evidence>
<gene>
    <name evidence="8 9 12" type="primary">Hm1</name>
    <name evidence="11" type="synonym">ANR_3</name>
    <name evidence="9" type="synonym">HCTR</name>
    <name evidence="14" type="ORF">ZEAMMB73_Zm00001d031802</name>
    <name evidence="15" type="ORF">Zm00014a_038320</name>
</gene>
<protein>
    <recommendedName>
        <fullName evidence="9">NADPH HC-toxin reductase 1</fullName>
        <ecNumber evidence="5">1.3.1.-</ecNumber>
    </recommendedName>
    <alternativeName>
        <fullName evidence="8 9 12">Disease-defense protein HM1</fullName>
    </alternativeName>
    <alternativeName>
        <fullName evidence="13">NAD-dependent epimerase/dehydratase domain-containing protein HM1</fullName>
    </alternativeName>
    <alternativeName>
        <fullName evidence="13">Protein Helminthosporium carbonum susceptibility 1</fullName>
    </alternativeName>
</protein>